<organism>
    <name type="scientific">Epiphyas postvittana nucleopolyhedrovirus</name>
    <name type="common">EppoMNPV</name>
    <dbReference type="NCBI Taxonomy" id="70600"/>
    <lineage>
        <taxon>Viruses</taxon>
        <taxon>Viruses incertae sedis</taxon>
        <taxon>Naldaviricetes</taxon>
        <taxon>Lefavirales</taxon>
        <taxon>Baculoviridae</taxon>
        <taxon>Alphabaculovirus</taxon>
        <taxon>Alphabaculovirus eppostvittanae</taxon>
    </lineage>
</organism>
<name>VP91_NPVEP</name>
<organismHost>
    <name type="scientific">Lepidoptera</name>
    <name type="common">butterflies and moths</name>
    <dbReference type="NCBI Taxonomy" id="7088"/>
</organismHost>
<reference key="1">
    <citation type="journal article" date="2002" name="J. Gen. Virol.">
        <title>Whole genome analysis of the Epiphyas postvittana nucleopolyhedrovirus.</title>
        <authorList>
            <person name="Hyink O."/>
            <person name="Dellow R.A."/>
            <person name="Olsen M.J."/>
            <person name="Caradoc-Davies K.M.B."/>
            <person name="Drake K."/>
            <person name="Herniou E.A."/>
            <person name="Cory J.S."/>
            <person name="O'Reilly D.R."/>
            <person name="Ward V.K."/>
        </authorList>
    </citation>
    <scope>NUCLEOTIDE SEQUENCE [LARGE SCALE GENOMIC DNA]</scope>
</reference>
<comment type="function">
    <text evidence="1">Probable capsid-associated protein.</text>
</comment>
<comment type="subcellular location">
    <subcellularLocation>
        <location evidence="1">Virion</location>
    </subcellularLocation>
    <text evidence="1">In virions, associates with the capsid and maybe also with the envelope surrounding the capsid.</text>
</comment>
<keyword id="KW-0147">Chitin-binding</keyword>
<keyword id="KW-1015">Disulfide bond</keyword>
<keyword id="KW-0325">Glycoprotein</keyword>
<keyword id="KW-0479">Metal-binding</keyword>
<keyword id="KW-1185">Reference proteome</keyword>
<keyword id="KW-0677">Repeat</keyword>
<keyword id="KW-0732">Signal</keyword>
<keyword id="KW-0946">Virion</keyword>
<keyword id="KW-0862">Zinc</keyword>
<keyword id="KW-0863">Zinc-finger</keyword>
<dbReference type="EMBL" id="AY043265">
    <property type="protein sequence ID" value="AAK85639.1"/>
    <property type="molecule type" value="Genomic_DNA"/>
</dbReference>
<dbReference type="RefSeq" id="NP_203244.1">
    <property type="nucleotide sequence ID" value="NC_003083.1"/>
</dbReference>
<dbReference type="CAZy" id="CBM14">
    <property type="family name" value="Carbohydrate-Binding Module Family 14"/>
</dbReference>
<dbReference type="KEGG" id="vg:1727387"/>
<dbReference type="OrthoDB" id="542at10239"/>
<dbReference type="Proteomes" id="UP000203221">
    <property type="component" value="Genome"/>
</dbReference>
<dbReference type="GO" id="GO:0005576">
    <property type="term" value="C:extracellular region"/>
    <property type="evidence" value="ECO:0007669"/>
    <property type="project" value="InterPro"/>
</dbReference>
<dbReference type="GO" id="GO:0044423">
    <property type="term" value="C:virion component"/>
    <property type="evidence" value="ECO:0007669"/>
    <property type="project" value="UniProtKB-KW"/>
</dbReference>
<dbReference type="GO" id="GO:0008061">
    <property type="term" value="F:chitin binding"/>
    <property type="evidence" value="ECO:0007669"/>
    <property type="project" value="UniProtKB-KW"/>
</dbReference>
<dbReference type="GO" id="GO:0008270">
    <property type="term" value="F:zinc ion binding"/>
    <property type="evidence" value="ECO:0007669"/>
    <property type="project" value="UniProtKB-KW"/>
</dbReference>
<dbReference type="InterPro" id="IPR013682">
    <property type="entry name" value="BaculoV_Vp91_N"/>
</dbReference>
<dbReference type="InterPro" id="IPR002557">
    <property type="entry name" value="Chitin-bd_dom"/>
</dbReference>
<dbReference type="InterPro" id="IPR036508">
    <property type="entry name" value="Chitin-bd_dom_sf"/>
</dbReference>
<dbReference type="Pfam" id="PF08475">
    <property type="entry name" value="Baculo_VP91_N"/>
    <property type="match status" value="1"/>
</dbReference>
<dbReference type="SMART" id="SM00494">
    <property type="entry name" value="ChtBD2"/>
    <property type="match status" value="2"/>
</dbReference>
<dbReference type="SUPFAM" id="SSF57625">
    <property type="entry name" value="Invertebrate chitin-binding proteins"/>
    <property type="match status" value="1"/>
</dbReference>
<dbReference type="PROSITE" id="PS50940">
    <property type="entry name" value="CHIT_BIND_II"/>
    <property type="match status" value="1"/>
</dbReference>
<dbReference type="PROSITE" id="PS51807">
    <property type="entry name" value="ZF_C2HC_BV"/>
    <property type="match status" value="1"/>
</dbReference>
<sequence>MSDVVLLVLAIIFIIIFVLIYCTIFFEFDETTFSKRLHVLTEYAKRTNAEHPTPDVLGHVSDVYEHTYIVTWFNTNDLSVYHETVHDDTIEVFDFLEQKFSPAKSTVAQRVAPSASDPNAFVLTGDKSEVKMHCPQHFNFDYNQLKCVPINPCDTRAPGLYAMDEHLLDALVHSQHLDKDYTINAHLQHPTLYLRCLADGSYVVQECPDNYTFDAATSECKVNELCQGRPDGYVLDYFPETLLVNEFVECYESKHVVKQCPEQHVFDRQLMTCVQAHPCAFNGAGHTYITADIGDTQYFECLNNQESQLITCINRVRNTDGQYACSGDARCANLTDGTGQLVHMHVDDTFEYASGQLVCDNFEVISEIDCNTSDVLTNMLFLQKFKLETEFPRQVFDNGECVPATFNNVRVLNDTFPIQNVPNDYNIDMQTSIIGLTDMIPKLLAGDDLDDTFGQNVVLARDVGAVGLNPVTAEPIDCLGTQLFDVLDASRANICTESGDGVLKTLKFENGTFLSVFRDNLTGSDIDYKRFCAISYENSLKIVKSDHFERRILTNILQSDVCADLYTTMYQKYTTLARKYTTTPFQYTYTFVKPPPNIVVYAKNIQLKNATISKPAFDPFANKQIDNKNNLAKPLFDPFKNAVWYSEPDGGDGDHWGPDLPPPVQPDSEPDESEPEPEVSPLILDKKDLFYSCYYELPSFKLTSCYAENDVIIDAITDLRNNVTVDAECEPAKDLHYVLNAYAYTGNGVGCRSVFNDDGVAVIKEPIPSYVFANLNTQSNDGVHYNRHVHVKDGRYMACPDHLYDDVEFRCNVEADKLYYLDNMQF</sequence>
<accession>Q91GH8</accession>
<protein>
    <recommendedName>
        <fullName>Capsid-associated protein Vp91</fullName>
    </recommendedName>
</protein>
<proteinExistence type="inferred from homology"/>
<feature type="signal peptide" evidence="2">
    <location>
        <begin position="1"/>
        <end position="18"/>
    </location>
</feature>
<feature type="chain" id="PRO_0000045467" description="Capsid-associated protein Vp91">
    <location>
        <begin position="19"/>
        <end position="826"/>
    </location>
</feature>
<feature type="domain" description="Chitin-binding type-2" evidence="3">
    <location>
        <begin position="223"/>
        <end position="281"/>
    </location>
</feature>
<feature type="zinc finger region" description="C2HC BV-type" evidence="4">
    <location>
        <begin position="147"/>
        <end position="196"/>
    </location>
</feature>
<feature type="region of interest" description="Disordered" evidence="5">
    <location>
        <begin position="651"/>
        <end position="679"/>
    </location>
</feature>
<feature type="compositionally biased region" description="Acidic residues" evidence="5">
    <location>
        <begin position="668"/>
        <end position="677"/>
    </location>
</feature>
<feature type="glycosylation site" description="N-linked (GlcNAc...) asparagine; by host" evidence="2">
    <location>
        <position position="210"/>
    </location>
</feature>
<feature type="glycosylation site" description="N-linked (GlcNAc...) asparagine; by host" evidence="2">
    <location>
        <position position="333"/>
    </location>
</feature>
<feature type="glycosylation site" description="N-linked (GlcNAc...) asparagine; by host" evidence="2">
    <location>
        <position position="371"/>
    </location>
</feature>
<feature type="glycosylation site" description="N-linked (GlcNAc...) asparagine; by host" evidence="2">
    <location>
        <position position="413"/>
    </location>
</feature>
<feature type="glycosylation site" description="N-linked (GlcNAc...) asparagine; by host" evidence="2">
    <location>
        <position position="510"/>
    </location>
</feature>
<feature type="glycosylation site" description="N-linked (GlcNAc...) asparagine; by host" evidence="2">
    <location>
        <position position="520"/>
    </location>
</feature>
<feature type="glycosylation site" description="N-linked (GlcNAc...) asparagine; by host" evidence="2">
    <location>
        <position position="609"/>
    </location>
</feature>
<feature type="glycosylation site" description="N-linked (GlcNAc...) asparagine; by host" evidence="2">
    <location>
        <position position="722"/>
    </location>
</feature>
<feature type="disulfide bond" evidence="3">
    <location>
        <begin position="207"/>
        <end position="220"/>
    </location>
</feature>
<feature type="disulfide bond" evidence="3">
    <location>
        <begin position="260"/>
        <end position="273"/>
    </location>
</feature>
<evidence type="ECO:0000250" key="1"/>
<evidence type="ECO:0000255" key="2"/>
<evidence type="ECO:0000255" key="3">
    <source>
        <dbReference type="PROSITE-ProRule" id="PRU00144"/>
    </source>
</evidence>
<evidence type="ECO:0000255" key="4">
    <source>
        <dbReference type="PROSITE-ProRule" id="PRU01148"/>
    </source>
</evidence>
<evidence type="ECO:0000256" key="5">
    <source>
        <dbReference type="SAM" id="MobiDB-lite"/>
    </source>
</evidence>
<gene>
    <name type="ORF">ORF75</name>
</gene>